<name>RR4_GUITH</name>
<accession>P17072</accession>
<gene>
    <name type="primary">rps4</name>
</gene>
<geneLocation type="chloroplast"/>
<keyword id="KW-0150">Chloroplast</keyword>
<keyword id="KW-0934">Plastid</keyword>
<keyword id="KW-0687">Ribonucleoprotein</keyword>
<keyword id="KW-0689">Ribosomal protein</keyword>
<keyword id="KW-0694">RNA-binding</keyword>
<keyword id="KW-0699">rRNA-binding</keyword>
<dbReference type="EMBL" id="AF041468">
    <property type="protein sequence ID" value="AAC35637.1"/>
    <property type="molecule type" value="Genomic_DNA"/>
</dbReference>
<dbReference type="RefSeq" id="NP_050703.1">
    <property type="nucleotide sequence ID" value="NC_000926.1"/>
</dbReference>
<dbReference type="SMR" id="P17072"/>
<dbReference type="GeneID" id="857002"/>
<dbReference type="HOGENOM" id="CLU_092403_0_5_1"/>
<dbReference type="OMA" id="QLVVELY"/>
<dbReference type="GO" id="GO:0009507">
    <property type="term" value="C:chloroplast"/>
    <property type="evidence" value="ECO:0007669"/>
    <property type="project" value="UniProtKB-SubCell"/>
</dbReference>
<dbReference type="GO" id="GO:0015935">
    <property type="term" value="C:small ribosomal subunit"/>
    <property type="evidence" value="ECO:0007669"/>
    <property type="project" value="InterPro"/>
</dbReference>
<dbReference type="GO" id="GO:0019843">
    <property type="term" value="F:rRNA binding"/>
    <property type="evidence" value="ECO:0007669"/>
    <property type="project" value="UniProtKB-UniRule"/>
</dbReference>
<dbReference type="GO" id="GO:0003735">
    <property type="term" value="F:structural constituent of ribosome"/>
    <property type="evidence" value="ECO:0007669"/>
    <property type="project" value="InterPro"/>
</dbReference>
<dbReference type="GO" id="GO:0042274">
    <property type="term" value="P:ribosomal small subunit biogenesis"/>
    <property type="evidence" value="ECO:0007669"/>
    <property type="project" value="TreeGrafter"/>
</dbReference>
<dbReference type="GO" id="GO:0006412">
    <property type="term" value="P:translation"/>
    <property type="evidence" value="ECO:0007669"/>
    <property type="project" value="UniProtKB-UniRule"/>
</dbReference>
<dbReference type="CDD" id="cd00165">
    <property type="entry name" value="S4"/>
    <property type="match status" value="1"/>
</dbReference>
<dbReference type="FunFam" id="3.10.290.10:FF:000001">
    <property type="entry name" value="30S ribosomal protein S4"/>
    <property type="match status" value="1"/>
</dbReference>
<dbReference type="FunFam" id="1.10.1050.10:FF:000002">
    <property type="entry name" value="30S ribosomal protein S4, chloroplastic"/>
    <property type="match status" value="1"/>
</dbReference>
<dbReference type="Gene3D" id="1.10.1050.10">
    <property type="entry name" value="Ribosomal Protein S4 Delta 41, Chain A, domain 1"/>
    <property type="match status" value="1"/>
</dbReference>
<dbReference type="Gene3D" id="3.10.290.10">
    <property type="entry name" value="RNA-binding S4 domain"/>
    <property type="match status" value="1"/>
</dbReference>
<dbReference type="HAMAP" id="MF_01306_B">
    <property type="entry name" value="Ribosomal_uS4_B"/>
    <property type="match status" value="1"/>
</dbReference>
<dbReference type="InterPro" id="IPR022801">
    <property type="entry name" value="Ribosomal_uS4"/>
</dbReference>
<dbReference type="InterPro" id="IPR005709">
    <property type="entry name" value="Ribosomal_uS4_bac-type"/>
</dbReference>
<dbReference type="InterPro" id="IPR018079">
    <property type="entry name" value="Ribosomal_uS4_CS"/>
</dbReference>
<dbReference type="InterPro" id="IPR001912">
    <property type="entry name" value="Ribosomal_uS4_N"/>
</dbReference>
<dbReference type="InterPro" id="IPR002942">
    <property type="entry name" value="S4_RNA-bd"/>
</dbReference>
<dbReference type="InterPro" id="IPR036986">
    <property type="entry name" value="S4_RNA-bd_sf"/>
</dbReference>
<dbReference type="NCBIfam" id="NF003717">
    <property type="entry name" value="PRK05327.1"/>
    <property type="match status" value="1"/>
</dbReference>
<dbReference type="NCBIfam" id="TIGR01017">
    <property type="entry name" value="rpsD_bact"/>
    <property type="match status" value="1"/>
</dbReference>
<dbReference type="PANTHER" id="PTHR11831">
    <property type="entry name" value="30S 40S RIBOSOMAL PROTEIN"/>
    <property type="match status" value="1"/>
</dbReference>
<dbReference type="PANTHER" id="PTHR11831:SF4">
    <property type="entry name" value="SMALL RIBOSOMAL SUBUNIT PROTEIN US4M"/>
    <property type="match status" value="1"/>
</dbReference>
<dbReference type="Pfam" id="PF00163">
    <property type="entry name" value="Ribosomal_S4"/>
    <property type="match status" value="1"/>
</dbReference>
<dbReference type="Pfam" id="PF01479">
    <property type="entry name" value="S4"/>
    <property type="match status" value="1"/>
</dbReference>
<dbReference type="SMART" id="SM01390">
    <property type="entry name" value="Ribosomal_S4"/>
    <property type="match status" value="1"/>
</dbReference>
<dbReference type="SMART" id="SM00363">
    <property type="entry name" value="S4"/>
    <property type="match status" value="1"/>
</dbReference>
<dbReference type="SUPFAM" id="SSF55174">
    <property type="entry name" value="Alpha-L RNA-binding motif"/>
    <property type="match status" value="1"/>
</dbReference>
<dbReference type="PROSITE" id="PS00632">
    <property type="entry name" value="RIBOSOMAL_S4"/>
    <property type="match status" value="1"/>
</dbReference>
<dbReference type="PROSITE" id="PS50889">
    <property type="entry name" value="S4"/>
    <property type="match status" value="1"/>
</dbReference>
<feature type="chain" id="PRO_0000132595" description="Small ribosomal subunit protein uS4c">
    <location>
        <begin position="1"/>
        <end position="200"/>
    </location>
</feature>
<feature type="domain" description="S4 RNA-binding">
    <location>
        <begin position="90"/>
        <end position="152"/>
    </location>
</feature>
<feature type="region of interest" description="Disordered" evidence="2">
    <location>
        <begin position="20"/>
        <end position="42"/>
    </location>
</feature>
<feature type="compositionally biased region" description="Polar residues" evidence="2">
    <location>
        <begin position="23"/>
        <end position="37"/>
    </location>
</feature>
<proteinExistence type="inferred from homology"/>
<reference key="1">
    <citation type="journal article" date="1990" name="Nucleic Acids Res.">
        <title>Nucleotide sequence of the genes for ribosomal protein S4 and tRNA(Arg) from the chlorophyll c-containing alga Cryptomonas phi.</title>
        <authorList>
            <person name="Douglas S.E."/>
            <person name="Durnford D.G."/>
        </authorList>
    </citation>
    <scope>NUCLEOTIDE SEQUENCE [GENOMIC DNA]</scope>
</reference>
<sequence>MSRYRGAVIKIIRRLGELPGLTRKTTTRTSRPGQHGTQARKPSEYAIRLEEKQKLRFNYGLTEKQLLQYVRTAKRIKGSTGEALLQLLEMRLDNVIFRLGMAPTIPAARQLVNHGHIKVNNTRVSIPSYQCKAGDMISIRQHPKSQSIVKNYLQFPGLANMPNHLQIDKDNLTGKINGIIERDWVALNELLIVEYYSRKG</sequence>
<protein>
    <recommendedName>
        <fullName evidence="3">Small ribosomal subunit protein uS4c</fullName>
    </recommendedName>
    <alternativeName>
        <fullName>30S ribosomal protein S4, chloroplastic</fullName>
    </alternativeName>
</protein>
<comment type="function">
    <text evidence="1">One of the primary rRNA binding proteins, it binds directly to 16S rRNA where it nucleates assembly of the body of the 30S subunit.</text>
</comment>
<comment type="function">
    <text evidence="1">With S5 and S12 plays an important role in translational accuracy.</text>
</comment>
<comment type="subunit">
    <text evidence="1">Part of the 30S ribosomal subunit. Contacts protein S5. The interaction surface between S4 and S5 is involved in control of translational fidelity (By similarity).</text>
</comment>
<comment type="subcellular location">
    <subcellularLocation>
        <location>Plastid</location>
        <location>Chloroplast</location>
    </subcellularLocation>
</comment>
<comment type="similarity">
    <text evidence="3">Belongs to the universal ribosomal protein uS4 family.</text>
</comment>
<organism>
    <name type="scientific">Guillardia theta</name>
    <name type="common">Cryptophyte</name>
    <name type="synonym">Cryptomonas phi</name>
    <dbReference type="NCBI Taxonomy" id="55529"/>
    <lineage>
        <taxon>Eukaryota</taxon>
        <taxon>Cryptophyceae</taxon>
        <taxon>Pyrenomonadales</taxon>
        <taxon>Geminigeraceae</taxon>
        <taxon>Guillardia</taxon>
    </lineage>
</organism>
<evidence type="ECO:0000250" key="1"/>
<evidence type="ECO:0000256" key="2">
    <source>
        <dbReference type="SAM" id="MobiDB-lite"/>
    </source>
</evidence>
<evidence type="ECO:0000305" key="3"/>